<comment type="function">
    <text evidence="3 6">Transcription factor that positively regulates the expression of the gene cluster that mediates the biosynthesis of depudecin, a highly oxidized eleven-carbon linear polyketide that acts as a histone deacetylase (HDAC) inhibitor and makes a small contribution to pathogenesis (PubMed:19737099, PubMed:28460114).</text>
</comment>
<comment type="subcellular location">
    <subcellularLocation>
        <location evidence="1">Nucleus</location>
    </subcellularLocation>
</comment>
<comment type="sequence caution" evidence="5">
    <conflict type="erroneous gene model prediction">
        <sequence resource="EMBL-CDS" id="KPA37940"/>
    </conflict>
</comment>
<name>DEP6_FUSLA</name>
<sequence>MIRQFSAGSSFTARHACEICRQRKVRCDRALPRCRRCERLNQACVYSPISQRRTRDEQLQELQERLAKTEAQLALDAPRGPASSMSSQSRSDSAAPAASRVPSVSASVPNSAATNPMDMVGTRSSNTSMDLPVNTSPMLDIDLFTAGADSNMALDWNPYLTALEPLDNLLPNRLSPRSLPQNGREEDISLAELNALHNYYFESVYFSFPFLNRDRFAGESTGNGPAINALIYSVALAGCTHSSPQHTKVSIYYTLARNYAEKCERDGQLNDLNFLQALLFIGRFEAMEGKVESSWMTLGRAAMLARLLRLPQMDRLEESTESQDGSGLSLLETTDPALLEERRRTFWALYILQSYIKTRTGWQCMLGDIKTFQINLPSPGLLRSDLTPLKMPFISEIGTEPCPEVSSYAGCVLMVDLALRCLDHAQGHGATNFWDGYCALVKNTDELFGMLKQHLNATSIRKDPVAFSLYLNLRATEIFSHESAIARSKEQGLPPLMTAESQRRATAAAFQISTAVRLNLPSPWKVDSDIIMLQAIFIAWPLAMALKAFYRELEHGGSRDSVNGVVTSSRLLFAALGHIEESGGHWHQSVAHVEAKLQELDEKNGFNSLAL</sequence>
<protein>
    <recommendedName>
        <fullName evidence="4">Depudecin biosynthesis cluster-specific transcription activator DEP6</fullName>
    </recommendedName>
    <alternativeName>
        <fullName evidence="4">Depudecin biosynthesis cluster protein 6</fullName>
    </alternativeName>
</protein>
<proteinExistence type="evidence at transcript level"/>
<accession>A0A0M9ER64</accession>
<organism>
    <name type="scientific">Fusarium langsethiae</name>
    <dbReference type="NCBI Taxonomy" id="179993"/>
    <lineage>
        <taxon>Eukaryota</taxon>
        <taxon>Fungi</taxon>
        <taxon>Dikarya</taxon>
        <taxon>Ascomycota</taxon>
        <taxon>Pezizomycotina</taxon>
        <taxon>Sordariomycetes</taxon>
        <taxon>Hypocreomycetidae</taxon>
        <taxon>Hypocreales</taxon>
        <taxon>Nectriaceae</taxon>
        <taxon>Fusarium</taxon>
    </lineage>
</organism>
<reference key="1">
    <citation type="submission" date="2015-04" db="EMBL/GenBank/DDBJ databases">
        <title>The draft genome sequence of Fusarium langsethiae, a T-2/HT-2 mycotoxin producer.</title>
        <authorList>
            <person name="Lysoe E."/>
            <person name="Divon H.H."/>
            <person name="Terzi V."/>
            <person name="Orru L."/>
            <person name="Lamontanara A."/>
            <person name="Kolseth A.-K."/>
            <person name="Frandsen R.J."/>
            <person name="Nielsen K."/>
            <person name="Thrane U."/>
        </authorList>
    </citation>
    <scope>NUCLEOTIDE SEQUENCE [LARGE SCALE GENOMIC DNA]</scope>
    <source>
        <strain>Fl201059</strain>
    </source>
</reference>
<reference key="2">
    <citation type="journal article" date="2009" name="Mol. Plant Microbe Interact.">
        <title>Biosynthesis and role in virulence of the histone deacetylase inhibitor depudecin from Alternaria brassicicola.</title>
        <authorList>
            <person name="Wight W.D."/>
            <person name="Kim K.-H."/>
            <person name="Lawrence C.B."/>
            <person name="Walton J.D."/>
        </authorList>
    </citation>
    <scope>FUNCTION</scope>
</reference>
<reference key="3">
    <citation type="journal article" date="2017" name="Mol. Biol. Evol.">
        <title>Differential retention of gene functions in a secondary metabolite cluster.</title>
        <authorList>
            <person name="Reynolds H."/>
            <person name="Slot J.C."/>
            <person name="Divon H.H."/>
            <person name="Lysoee E."/>
            <person name="Proctor R.H."/>
            <person name="Brown D.W."/>
        </authorList>
    </citation>
    <scope>FUNCTION</scope>
    <scope>INDUCTION</scope>
</reference>
<dbReference type="EMBL" id="JXCE01000338">
    <property type="protein sequence ID" value="KPA37940.1"/>
    <property type="status" value="ALT_SEQ"/>
    <property type="molecule type" value="Genomic_DNA"/>
</dbReference>
<dbReference type="SMR" id="A0A0M9ER64"/>
<dbReference type="Proteomes" id="UP000037904">
    <property type="component" value="Unassembled WGS sequence"/>
</dbReference>
<dbReference type="GO" id="GO:0005634">
    <property type="term" value="C:nucleus"/>
    <property type="evidence" value="ECO:0007669"/>
    <property type="project" value="UniProtKB-SubCell"/>
</dbReference>
<dbReference type="GO" id="GO:0003677">
    <property type="term" value="F:DNA binding"/>
    <property type="evidence" value="ECO:0007669"/>
    <property type="project" value="UniProtKB-KW"/>
</dbReference>
<dbReference type="GO" id="GO:0000981">
    <property type="term" value="F:DNA-binding transcription factor activity, RNA polymerase II-specific"/>
    <property type="evidence" value="ECO:0007669"/>
    <property type="project" value="InterPro"/>
</dbReference>
<dbReference type="GO" id="GO:0008270">
    <property type="term" value="F:zinc ion binding"/>
    <property type="evidence" value="ECO:0007669"/>
    <property type="project" value="InterPro"/>
</dbReference>
<dbReference type="GO" id="GO:0006351">
    <property type="term" value="P:DNA-templated transcription"/>
    <property type="evidence" value="ECO:0007669"/>
    <property type="project" value="InterPro"/>
</dbReference>
<dbReference type="CDD" id="cd12148">
    <property type="entry name" value="fungal_TF_MHR"/>
    <property type="match status" value="1"/>
</dbReference>
<dbReference type="CDD" id="cd00067">
    <property type="entry name" value="GAL4"/>
    <property type="match status" value="1"/>
</dbReference>
<dbReference type="Gene3D" id="4.10.240.10">
    <property type="entry name" value="Zn(2)-C6 fungal-type DNA-binding domain"/>
    <property type="match status" value="1"/>
</dbReference>
<dbReference type="InterPro" id="IPR050815">
    <property type="entry name" value="TF_fung"/>
</dbReference>
<dbReference type="InterPro" id="IPR007219">
    <property type="entry name" value="Transcription_factor_dom_fun"/>
</dbReference>
<dbReference type="InterPro" id="IPR036864">
    <property type="entry name" value="Zn2-C6_fun-type_DNA-bd_sf"/>
</dbReference>
<dbReference type="InterPro" id="IPR001138">
    <property type="entry name" value="Zn2Cys6_DnaBD"/>
</dbReference>
<dbReference type="PANTHER" id="PTHR47338:SF10">
    <property type="entry name" value="TRANSCRIPTION FACTOR DOMAIN-CONTAINING PROTEIN-RELATED"/>
    <property type="match status" value="1"/>
</dbReference>
<dbReference type="PANTHER" id="PTHR47338">
    <property type="entry name" value="ZN(II)2CYS6 TRANSCRIPTION FACTOR (EUROFUNG)-RELATED"/>
    <property type="match status" value="1"/>
</dbReference>
<dbReference type="Pfam" id="PF04082">
    <property type="entry name" value="Fungal_trans"/>
    <property type="match status" value="1"/>
</dbReference>
<dbReference type="Pfam" id="PF00172">
    <property type="entry name" value="Zn_clus"/>
    <property type="match status" value="1"/>
</dbReference>
<dbReference type="SMART" id="SM00906">
    <property type="entry name" value="Fungal_trans"/>
    <property type="match status" value="1"/>
</dbReference>
<dbReference type="SMART" id="SM00066">
    <property type="entry name" value="GAL4"/>
    <property type="match status" value="1"/>
</dbReference>
<dbReference type="SUPFAM" id="SSF57701">
    <property type="entry name" value="Zn2/Cys6 DNA-binding domain"/>
    <property type="match status" value="1"/>
</dbReference>
<dbReference type="PROSITE" id="PS00463">
    <property type="entry name" value="ZN2_CY6_FUNGAL_1"/>
    <property type="match status" value="1"/>
</dbReference>
<dbReference type="PROSITE" id="PS50048">
    <property type="entry name" value="ZN2_CY6_FUNGAL_2"/>
    <property type="match status" value="1"/>
</dbReference>
<evidence type="ECO:0000255" key="1">
    <source>
        <dbReference type="PROSITE-ProRule" id="PRU00227"/>
    </source>
</evidence>
<evidence type="ECO:0000256" key="2">
    <source>
        <dbReference type="SAM" id="MobiDB-lite"/>
    </source>
</evidence>
<evidence type="ECO:0000269" key="3">
    <source>
    </source>
</evidence>
<evidence type="ECO:0000303" key="4">
    <source>
    </source>
</evidence>
<evidence type="ECO:0000305" key="5"/>
<evidence type="ECO:0000305" key="6">
    <source>
    </source>
</evidence>
<gene>
    <name evidence="4" type="primary">DEP6</name>
    <name type="ORF">FLAG1_09231</name>
</gene>
<keyword id="KW-0238">DNA-binding</keyword>
<keyword id="KW-0479">Metal-binding</keyword>
<keyword id="KW-0539">Nucleus</keyword>
<keyword id="KW-1185">Reference proteome</keyword>
<keyword id="KW-0804">Transcription</keyword>
<keyword id="KW-0805">Transcription regulation</keyword>
<keyword id="KW-0862">Zinc</keyword>
<feature type="chain" id="PRO_0000441946" description="Depudecin biosynthesis cluster-specific transcription activator DEP6">
    <location>
        <begin position="1"/>
        <end position="611"/>
    </location>
</feature>
<feature type="DNA-binding region" description="Zn(2)-C6 fungal-type" evidence="1">
    <location>
        <begin position="17"/>
        <end position="44"/>
    </location>
</feature>
<feature type="region of interest" description="Disordered" evidence="2">
    <location>
        <begin position="76"/>
        <end position="125"/>
    </location>
</feature>
<feature type="compositionally biased region" description="Low complexity" evidence="2">
    <location>
        <begin position="78"/>
        <end position="113"/>
    </location>
</feature>